<comment type="function">
    <text evidence="1 2">Acts both as a transcriptional activator and a repressor (By similarity). Binds to the DNA sequence 5'-ACAAT-3' and shows a preference for guanine residues surrounding this core motif (By similarity). Binds to its own promoter and activates its own transcription (By similarity). Required to activate the expression of postmeiotic genes involved in spermiogenesis (By similarity). Binds to the promoter region of CTNNB1 and represses its transcription which leads to inhibition of Wnt signaling (By similarity). Also inhibits Wnt signaling by binding to the CTNNB1 protein, preventing interaction of CTNNB1 with TCF7L2/TCF4 (By similarity).</text>
</comment>
<comment type="subunit">
    <text evidence="1">Interacts with CTNNB1, competitively inhibiting CTNNB1-TCF7L2/TCF4 interaction.</text>
</comment>
<comment type="subcellular location">
    <subcellularLocation>
        <location evidence="3">Nucleus</location>
    </subcellularLocation>
    <subcellularLocation>
        <location evidence="1">Cytoplasm</location>
    </subcellularLocation>
    <text evidence="2">Enriched at the chromocenter.</text>
</comment>
<proteinExistence type="evidence at transcript level"/>
<protein>
    <recommendedName>
        <fullName>Transcription factor SOX-30</fullName>
    </recommendedName>
</protein>
<dbReference type="EMBL" id="AB064989">
    <property type="protein sequence ID" value="BAB83531.1"/>
    <property type="molecule type" value="mRNA"/>
</dbReference>
<dbReference type="EMBL" id="AB168728">
    <property type="protein sequence ID" value="BAE00838.1"/>
    <property type="molecule type" value="mRNA"/>
</dbReference>
<dbReference type="RefSeq" id="XP_005558452.1">
    <property type="nucleotide sequence ID" value="XM_005558395.2"/>
</dbReference>
<dbReference type="SMR" id="Q8WNV5"/>
<dbReference type="STRING" id="9541.ENSMFAP00000013682"/>
<dbReference type="GeneID" id="101925990"/>
<dbReference type="KEGG" id="mcf:101925990"/>
<dbReference type="CTD" id="11063"/>
<dbReference type="VEuPathDB" id="HostDB:ENSMFAG00000029536"/>
<dbReference type="eggNOG" id="KOG0527">
    <property type="taxonomic scope" value="Eukaryota"/>
</dbReference>
<dbReference type="OMA" id="FIPSPAY"/>
<dbReference type="OrthoDB" id="11300at314294"/>
<dbReference type="Proteomes" id="UP000233100">
    <property type="component" value="Chromosome 6"/>
</dbReference>
<dbReference type="GO" id="GO:0010369">
    <property type="term" value="C:chromocenter"/>
    <property type="evidence" value="ECO:0000250"/>
    <property type="project" value="UniProtKB"/>
</dbReference>
<dbReference type="GO" id="GO:0005737">
    <property type="term" value="C:cytoplasm"/>
    <property type="evidence" value="ECO:0000250"/>
    <property type="project" value="UniProtKB"/>
</dbReference>
<dbReference type="GO" id="GO:0005634">
    <property type="term" value="C:nucleus"/>
    <property type="evidence" value="ECO:0000250"/>
    <property type="project" value="UniProtKB"/>
</dbReference>
<dbReference type="GO" id="GO:0001228">
    <property type="term" value="F:DNA-binding transcription activator activity, RNA polymerase II-specific"/>
    <property type="evidence" value="ECO:0000250"/>
    <property type="project" value="UniProtKB"/>
</dbReference>
<dbReference type="GO" id="GO:0001227">
    <property type="term" value="F:DNA-binding transcription repressor activity, RNA polymerase II-specific"/>
    <property type="evidence" value="ECO:0000250"/>
    <property type="project" value="UniProtKB"/>
</dbReference>
<dbReference type="GO" id="GO:1990837">
    <property type="term" value="F:sequence-specific double-stranded DNA binding"/>
    <property type="evidence" value="ECO:0007669"/>
    <property type="project" value="TreeGrafter"/>
</dbReference>
<dbReference type="GO" id="GO:0000122">
    <property type="term" value="P:negative regulation of transcription by RNA polymerase II"/>
    <property type="evidence" value="ECO:0000250"/>
    <property type="project" value="UniProtKB"/>
</dbReference>
<dbReference type="GO" id="GO:0030178">
    <property type="term" value="P:negative regulation of Wnt signaling pathway"/>
    <property type="evidence" value="ECO:0000250"/>
    <property type="project" value="UniProtKB"/>
</dbReference>
<dbReference type="GO" id="GO:0045944">
    <property type="term" value="P:positive regulation of transcription by RNA polymerase II"/>
    <property type="evidence" value="ECO:0000250"/>
    <property type="project" value="UniProtKB"/>
</dbReference>
<dbReference type="GO" id="GO:0120211">
    <property type="term" value="P:proacrosomal vesicle fusion"/>
    <property type="evidence" value="ECO:0000250"/>
    <property type="project" value="UniProtKB"/>
</dbReference>
<dbReference type="GO" id="GO:0007286">
    <property type="term" value="P:spermatid development"/>
    <property type="evidence" value="ECO:0000250"/>
    <property type="project" value="UniProtKB"/>
</dbReference>
<dbReference type="CDD" id="cd22033">
    <property type="entry name" value="HMG-box_SoxH_SOX30"/>
    <property type="match status" value="1"/>
</dbReference>
<dbReference type="FunFam" id="1.10.30.10:FF:000027">
    <property type="entry name" value="Transcription factor SOX-30"/>
    <property type="match status" value="1"/>
</dbReference>
<dbReference type="Gene3D" id="1.10.30.10">
    <property type="entry name" value="High mobility group box domain"/>
    <property type="match status" value="1"/>
</dbReference>
<dbReference type="InterPro" id="IPR009071">
    <property type="entry name" value="HMG_box_dom"/>
</dbReference>
<dbReference type="InterPro" id="IPR036910">
    <property type="entry name" value="HMG_box_dom_sf"/>
</dbReference>
<dbReference type="InterPro" id="IPR052856">
    <property type="entry name" value="SOX30_TF"/>
</dbReference>
<dbReference type="PANTHER" id="PTHR47279">
    <property type="entry name" value="TRANSCRIPTION FACTOR SOX-30"/>
    <property type="match status" value="1"/>
</dbReference>
<dbReference type="PANTHER" id="PTHR47279:SF1">
    <property type="entry name" value="TRANSCRIPTION FACTOR SOX-30"/>
    <property type="match status" value="1"/>
</dbReference>
<dbReference type="Pfam" id="PF00505">
    <property type="entry name" value="HMG_box"/>
    <property type="match status" value="1"/>
</dbReference>
<dbReference type="SMART" id="SM00398">
    <property type="entry name" value="HMG"/>
    <property type="match status" value="1"/>
</dbReference>
<dbReference type="SUPFAM" id="SSF47095">
    <property type="entry name" value="HMG-box"/>
    <property type="match status" value="1"/>
</dbReference>
<dbReference type="PROSITE" id="PS50118">
    <property type="entry name" value="HMG_BOX_2"/>
    <property type="match status" value="1"/>
</dbReference>
<name>SOX30_MACFA</name>
<sequence>MERARPEPQPQQRPLRPAPPLLPVEGTTFWAAAVEPPPSPPTLSAAASATLASSCGEAVASGLPPAVRRLLQVKPEQVLLLPQPQARDEEAAASPAQARLLQFRPDLRLLPPPSASEGAPSRPELHPVQPRALHFKAKKQELGPGLDPSVGPRGGVETGPRASRVVKLEGPGPALAYFRGNEKGKLEAEEVMRDAMKGGDGKSPAAIREGVIKTEEPERLLEDCRLDAEPASNGLVHGSAEVILAPTSGAFGPHQQDLRIPLTLHTVPPGARIQFQGAPPSELIRLTKVPLTPVPIKMQSLLEPSVKIETKDVPLTVLPSDAGIPDTPFSKDRNGHVKRPMNAFMVWARIHRPALAKANPAANNAEISVQLGLEWNKLSEEQKKPYYDEAQKIKEKHREEFPGWVYQPRPGKRKRFPLSVSNVFSGTTQNIISTNPTTVYPYRSPTYSVVIPSLQNPITHPVGETSPAIQLPTPAVQRPSPVTLFQPSVSSAAQVAVQDPSLPLYPALPPQRFAGPSQTDTHQLHSEGTHTVKQPTPVSLESTNRISNSASTAHARFATSTIQPPKEYSSVSPCPRSAPIPQASPIPHPHVYQPPPLGHPATLFGTPPRFSFHHPYFLPGPHYFPSSTCPYSRPPFGYGNFPSSMPECLGYYEDRYQKHEAIFSALNRDYSFRDYSSERTHSENSRSCENMNGTSFYNSHSHSGEEYLNPVPQLDIGALENVFTAPTSTPSSIQQVNVTDSDEEEEEKVLRDL</sequence>
<gene>
    <name type="primary">SOX30</name>
    <name type="ORF">QtsA-10245</name>
    <name type="ORF">QtsA-14427</name>
</gene>
<accession>Q8WNV5</accession>
<accession>Q4R7T4</accession>
<organism>
    <name type="scientific">Macaca fascicularis</name>
    <name type="common">Crab-eating macaque</name>
    <name type="synonym">Cynomolgus monkey</name>
    <dbReference type="NCBI Taxonomy" id="9541"/>
    <lineage>
        <taxon>Eukaryota</taxon>
        <taxon>Metazoa</taxon>
        <taxon>Chordata</taxon>
        <taxon>Craniata</taxon>
        <taxon>Vertebrata</taxon>
        <taxon>Euteleostomi</taxon>
        <taxon>Mammalia</taxon>
        <taxon>Eutheria</taxon>
        <taxon>Euarchontoglires</taxon>
        <taxon>Primates</taxon>
        <taxon>Haplorrhini</taxon>
        <taxon>Catarrhini</taxon>
        <taxon>Cercopithecidae</taxon>
        <taxon>Cercopithecinae</taxon>
        <taxon>Macaca</taxon>
    </lineage>
</organism>
<feature type="chain" id="PRO_0000048774" description="Transcription factor SOX-30">
    <location>
        <begin position="1"/>
        <end position="753"/>
    </location>
</feature>
<feature type="DNA-binding region" description="HMG box" evidence="3">
    <location>
        <begin position="337"/>
        <end position="405"/>
    </location>
</feature>
<feature type="region of interest" description="Disordered" evidence="4">
    <location>
        <begin position="1"/>
        <end position="45"/>
    </location>
</feature>
<feature type="region of interest" description="Disordered" evidence="4">
    <location>
        <begin position="140"/>
        <end position="161"/>
    </location>
</feature>
<feature type="region of interest" description="Disordered" evidence="4">
    <location>
        <begin position="514"/>
        <end position="540"/>
    </location>
</feature>
<feature type="region of interest" description="Disordered" evidence="4">
    <location>
        <begin position="726"/>
        <end position="753"/>
    </location>
</feature>
<feature type="compositionally biased region" description="Pro residues" evidence="4">
    <location>
        <begin position="7"/>
        <end position="22"/>
    </location>
</feature>
<feature type="compositionally biased region" description="Polar residues" evidence="4">
    <location>
        <begin position="531"/>
        <end position="540"/>
    </location>
</feature>
<feature type="compositionally biased region" description="Polar residues" evidence="4">
    <location>
        <begin position="726"/>
        <end position="739"/>
    </location>
</feature>
<keyword id="KW-0010">Activator</keyword>
<keyword id="KW-0963">Cytoplasm</keyword>
<keyword id="KW-0238">DNA-binding</keyword>
<keyword id="KW-0539">Nucleus</keyword>
<keyword id="KW-1185">Reference proteome</keyword>
<keyword id="KW-0678">Repressor</keyword>
<keyword id="KW-0804">Transcription</keyword>
<keyword id="KW-0805">Transcription regulation</keyword>
<evidence type="ECO:0000250" key="1">
    <source>
        <dbReference type="UniProtKB" id="O94993"/>
    </source>
</evidence>
<evidence type="ECO:0000250" key="2">
    <source>
        <dbReference type="UniProtKB" id="Q8CGW4"/>
    </source>
</evidence>
<evidence type="ECO:0000255" key="3">
    <source>
        <dbReference type="PROSITE-ProRule" id="PRU00267"/>
    </source>
</evidence>
<evidence type="ECO:0000256" key="4">
    <source>
        <dbReference type="SAM" id="MobiDB-lite"/>
    </source>
</evidence>
<reference key="1">
    <citation type="journal article" date="2002" name="BMC Genomics">
        <title>Cynomolgus monkey testicular cDNAs for discovery of novel human genes in the human genome sequence.</title>
        <authorList>
            <person name="Osada N."/>
            <person name="Hida M."/>
            <person name="Kusuda J."/>
            <person name="Tanuma R."/>
            <person name="Hirata M."/>
            <person name="Suto Y."/>
            <person name="Hirai M."/>
            <person name="Terao K."/>
            <person name="Sugano S."/>
            <person name="Hashimoto K."/>
        </authorList>
    </citation>
    <scope>NUCLEOTIDE SEQUENCE [LARGE SCALE MRNA]</scope>
    <source>
        <tissue>Testis</tissue>
    </source>
</reference>
<reference key="2">
    <citation type="submission" date="2005-06" db="EMBL/GenBank/DDBJ databases">
        <title>DNA sequences of macaque genes expressed in brain or testis and its evolutionary implications.</title>
        <authorList>
            <consortium name="International consortium for macaque cDNA sequencing and analysis"/>
        </authorList>
    </citation>
    <scope>NUCLEOTIDE SEQUENCE [LARGE SCALE MRNA]</scope>
    <source>
        <tissue>Testis</tissue>
    </source>
</reference>